<dbReference type="EMBL" id="CP000919">
    <property type="protein sequence ID" value="ACO19393.1"/>
    <property type="molecule type" value="Genomic_DNA"/>
</dbReference>
<dbReference type="RefSeq" id="WP_001207696.1">
    <property type="nucleotide sequence ID" value="NC_012466.1"/>
</dbReference>
<dbReference type="SMR" id="C1CFT0"/>
<dbReference type="GeneID" id="93740105"/>
<dbReference type="KEGG" id="sjj:SPJ_1604"/>
<dbReference type="HOGENOM" id="CLU_016077_6_2_9"/>
<dbReference type="Proteomes" id="UP000002206">
    <property type="component" value="Chromosome"/>
</dbReference>
<dbReference type="GO" id="GO:0005525">
    <property type="term" value="F:GTP binding"/>
    <property type="evidence" value="ECO:0007669"/>
    <property type="project" value="UniProtKB-UniRule"/>
</dbReference>
<dbReference type="GO" id="GO:0043022">
    <property type="term" value="F:ribosome binding"/>
    <property type="evidence" value="ECO:0007669"/>
    <property type="project" value="TreeGrafter"/>
</dbReference>
<dbReference type="GO" id="GO:0042254">
    <property type="term" value="P:ribosome biogenesis"/>
    <property type="evidence" value="ECO:0007669"/>
    <property type="project" value="UniProtKB-KW"/>
</dbReference>
<dbReference type="CDD" id="cd01894">
    <property type="entry name" value="EngA1"/>
    <property type="match status" value="1"/>
</dbReference>
<dbReference type="CDD" id="cd01895">
    <property type="entry name" value="EngA2"/>
    <property type="match status" value="1"/>
</dbReference>
<dbReference type="FunFam" id="3.30.300.20:FF:000004">
    <property type="entry name" value="GTPase Der"/>
    <property type="match status" value="1"/>
</dbReference>
<dbReference type="FunFam" id="3.40.50.300:FF:000040">
    <property type="entry name" value="GTPase Der"/>
    <property type="match status" value="1"/>
</dbReference>
<dbReference type="FunFam" id="3.40.50.300:FF:000057">
    <property type="entry name" value="GTPase Der"/>
    <property type="match status" value="1"/>
</dbReference>
<dbReference type="Gene3D" id="3.30.300.20">
    <property type="match status" value="1"/>
</dbReference>
<dbReference type="Gene3D" id="3.40.50.300">
    <property type="entry name" value="P-loop containing nucleotide triphosphate hydrolases"/>
    <property type="match status" value="2"/>
</dbReference>
<dbReference type="HAMAP" id="MF_00195">
    <property type="entry name" value="GTPase_Der"/>
    <property type="match status" value="1"/>
</dbReference>
<dbReference type="InterPro" id="IPR031166">
    <property type="entry name" value="G_ENGA"/>
</dbReference>
<dbReference type="InterPro" id="IPR006073">
    <property type="entry name" value="GTP-bd"/>
</dbReference>
<dbReference type="InterPro" id="IPR016484">
    <property type="entry name" value="GTPase_Der"/>
</dbReference>
<dbReference type="InterPro" id="IPR032859">
    <property type="entry name" value="KH_dom-like"/>
</dbReference>
<dbReference type="InterPro" id="IPR015946">
    <property type="entry name" value="KH_dom-like_a/b"/>
</dbReference>
<dbReference type="InterPro" id="IPR027417">
    <property type="entry name" value="P-loop_NTPase"/>
</dbReference>
<dbReference type="InterPro" id="IPR005225">
    <property type="entry name" value="Small_GTP-bd"/>
</dbReference>
<dbReference type="NCBIfam" id="TIGR03594">
    <property type="entry name" value="GTPase_EngA"/>
    <property type="match status" value="1"/>
</dbReference>
<dbReference type="NCBIfam" id="TIGR00231">
    <property type="entry name" value="small_GTP"/>
    <property type="match status" value="2"/>
</dbReference>
<dbReference type="PANTHER" id="PTHR43834">
    <property type="entry name" value="GTPASE DER"/>
    <property type="match status" value="1"/>
</dbReference>
<dbReference type="PANTHER" id="PTHR43834:SF6">
    <property type="entry name" value="GTPASE DER"/>
    <property type="match status" value="1"/>
</dbReference>
<dbReference type="Pfam" id="PF14714">
    <property type="entry name" value="KH_dom-like"/>
    <property type="match status" value="1"/>
</dbReference>
<dbReference type="Pfam" id="PF01926">
    <property type="entry name" value="MMR_HSR1"/>
    <property type="match status" value="2"/>
</dbReference>
<dbReference type="PIRSF" id="PIRSF006485">
    <property type="entry name" value="GTP-binding_EngA"/>
    <property type="match status" value="1"/>
</dbReference>
<dbReference type="PRINTS" id="PR00326">
    <property type="entry name" value="GTP1OBG"/>
</dbReference>
<dbReference type="SUPFAM" id="SSF52540">
    <property type="entry name" value="P-loop containing nucleoside triphosphate hydrolases"/>
    <property type="match status" value="2"/>
</dbReference>
<dbReference type="PROSITE" id="PS51712">
    <property type="entry name" value="G_ENGA"/>
    <property type="match status" value="2"/>
</dbReference>
<organism>
    <name type="scientific">Streptococcus pneumoniae (strain JJA)</name>
    <dbReference type="NCBI Taxonomy" id="488222"/>
    <lineage>
        <taxon>Bacteria</taxon>
        <taxon>Bacillati</taxon>
        <taxon>Bacillota</taxon>
        <taxon>Bacilli</taxon>
        <taxon>Lactobacillales</taxon>
        <taxon>Streptococcaceae</taxon>
        <taxon>Streptococcus</taxon>
    </lineage>
</organism>
<comment type="function">
    <text evidence="1">GTPase that plays an essential role in the late steps of ribosome biogenesis.</text>
</comment>
<comment type="subunit">
    <text evidence="1">Associates with the 50S ribosomal subunit.</text>
</comment>
<comment type="similarity">
    <text evidence="1">Belongs to the TRAFAC class TrmE-Era-EngA-EngB-Septin-like GTPase superfamily. EngA (Der) GTPase family.</text>
</comment>
<accession>C1CFT0</accession>
<gene>
    <name evidence="1" type="primary">der</name>
    <name type="synonym">engA</name>
    <name type="ordered locus">SPJ_1604</name>
</gene>
<keyword id="KW-0342">GTP-binding</keyword>
<keyword id="KW-0547">Nucleotide-binding</keyword>
<keyword id="KW-0677">Repeat</keyword>
<keyword id="KW-0690">Ribosome biogenesis</keyword>
<protein>
    <recommendedName>
        <fullName evidence="1">GTPase Der</fullName>
    </recommendedName>
    <alternativeName>
        <fullName evidence="1">GTP-binding protein EngA</fullName>
    </alternativeName>
</protein>
<proteinExistence type="inferred from homology"/>
<evidence type="ECO:0000255" key="1">
    <source>
        <dbReference type="HAMAP-Rule" id="MF_00195"/>
    </source>
</evidence>
<sequence>MALPTIAIVGRPNVGKSTLFNRIAGERISIVEDVEGVTRDRIYATGEWLNRSFSMIDTGGIDDVDAPFMEQIKHQAEIAMEEADVIVFVVSGKEGITDADEYVARKLYKTHKPVILAVNKVDNPEMRNDIYDFYALGLGEPLPISSVHGIGTGDVLDAIVENLPNEYEEENPDVIKFSLIGRPNVGKSSLINAILGEDRVIASPVAGTTRDAIDTHFTDTDGQEFTMIDTAGMRKSGKVYENTEKYSVMRAMRAIDRSDVVLMVINAEEGIREYDKRIAGFAHEAGKGMIIVVNKWDTLEKDNHTMKNWEEDIREQFQYLPYAPIIFVSALTKQRLHKLPEMIKQISESQNTRIPSAVLNDVIMDAIAINPTPTDKGKRLKIFYATQVATKPPTFVIFVNEEELMHFSYLRFLENQIRKAFVFEGTPIHLIARKRK</sequence>
<name>DER_STRZJ</name>
<reference key="1">
    <citation type="journal article" date="2010" name="Genome Biol.">
        <title>Structure and dynamics of the pan-genome of Streptococcus pneumoniae and closely related species.</title>
        <authorList>
            <person name="Donati C."/>
            <person name="Hiller N.L."/>
            <person name="Tettelin H."/>
            <person name="Muzzi A."/>
            <person name="Croucher N.J."/>
            <person name="Angiuoli S.V."/>
            <person name="Oggioni M."/>
            <person name="Dunning Hotopp J.C."/>
            <person name="Hu F.Z."/>
            <person name="Riley D.R."/>
            <person name="Covacci A."/>
            <person name="Mitchell T.J."/>
            <person name="Bentley S.D."/>
            <person name="Kilian M."/>
            <person name="Ehrlich G.D."/>
            <person name="Rappuoli R."/>
            <person name="Moxon E.R."/>
            <person name="Masignani V."/>
        </authorList>
    </citation>
    <scope>NUCLEOTIDE SEQUENCE [LARGE SCALE GENOMIC DNA]</scope>
    <source>
        <strain>JJA</strain>
    </source>
</reference>
<feature type="chain" id="PRO_1000124375" description="GTPase Der">
    <location>
        <begin position="1"/>
        <end position="436"/>
    </location>
</feature>
<feature type="domain" description="EngA-type G 1">
    <location>
        <begin position="4"/>
        <end position="167"/>
    </location>
</feature>
<feature type="domain" description="EngA-type G 2">
    <location>
        <begin position="175"/>
        <end position="351"/>
    </location>
</feature>
<feature type="domain" description="KH-like" evidence="1">
    <location>
        <begin position="352"/>
        <end position="436"/>
    </location>
</feature>
<feature type="binding site" evidence="1">
    <location>
        <begin position="10"/>
        <end position="17"/>
    </location>
    <ligand>
        <name>GTP</name>
        <dbReference type="ChEBI" id="CHEBI:37565"/>
        <label>1</label>
    </ligand>
</feature>
<feature type="binding site" evidence="1">
    <location>
        <begin position="57"/>
        <end position="61"/>
    </location>
    <ligand>
        <name>GTP</name>
        <dbReference type="ChEBI" id="CHEBI:37565"/>
        <label>1</label>
    </ligand>
</feature>
<feature type="binding site" evidence="1">
    <location>
        <begin position="119"/>
        <end position="122"/>
    </location>
    <ligand>
        <name>GTP</name>
        <dbReference type="ChEBI" id="CHEBI:37565"/>
        <label>1</label>
    </ligand>
</feature>
<feature type="binding site" evidence="1">
    <location>
        <begin position="181"/>
        <end position="188"/>
    </location>
    <ligand>
        <name>GTP</name>
        <dbReference type="ChEBI" id="CHEBI:37565"/>
        <label>2</label>
    </ligand>
</feature>
<feature type="binding site" evidence="1">
    <location>
        <begin position="229"/>
        <end position="233"/>
    </location>
    <ligand>
        <name>GTP</name>
        <dbReference type="ChEBI" id="CHEBI:37565"/>
        <label>2</label>
    </ligand>
</feature>
<feature type="binding site" evidence="1">
    <location>
        <begin position="294"/>
        <end position="297"/>
    </location>
    <ligand>
        <name>GTP</name>
        <dbReference type="ChEBI" id="CHEBI:37565"/>
        <label>2</label>
    </ligand>
</feature>